<proteinExistence type="inferred from homology"/>
<evidence type="ECO:0000255" key="1">
    <source>
        <dbReference type="HAMAP-Rule" id="MF_01018"/>
    </source>
</evidence>
<comment type="function">
    <text evidence="1">Catalyzes the condensation of ATP and 5-phosphoribose 1-diphosphate to form N'-(5'-phosphoribosyl)-ATP (PR-ATP). Has a crucial role in the pathway because the rate of histidine biosynthesis seems to be controlled primarily by regulation of HisG enzymatic activity.</text>
</comment>
<comment type="catalytic activity">
    <reaction evidence="1">
        <text>1-(5-phospho-beta-D-ribosyl)-ATP + diphosphate = 5-phospho-alpha-D-ribose 1-diphosphate + ATP</text>
        <dbReference type="Rhea" id="RHEA:18473"/>
        <dbReference type="ChEBI" id="CHEBI:30616"/>
        <dbReference type="ChEBI" id="CHEBI:33019"/>
        <dbReference type="ChEBI" id="CHEBI:58017"/>
        <dbReference type="ChEBI" id="CHEBI:73183"/>
        <dbReference type="EC" id="2.4.2.17"/>
    </reaction>
</comment>
<comment type="pathway">
    <text evidence="1">Amino-acid biosynthesis; L-histidine biosynthesis; L-histidine from 5-phospho-alpha-D-ribose 1-diphosphate: step 1/9.</text>
</comment>
<comment type="subunit">
    <text evidence="1">Heteromultimer composed of HisG and HisZ subunits.</text>
</comment>
<comment type="subcellular location">
    <subcellularLocation>
        <location evidence="1">Cytoplasm</location>
    </subcellularLocation>
</comment>
<comment type="domain">
    <text>Lacks the C-terminal regulatory region which is replaced by HisZ.</text>
</comment>
<comment type="similarity">
    <text evidence="1">Belongs to the ATP phosphoribosyltransferase family. Short subfamily.</text>
</comment>
<protein>
    <recommendedName>
        <fullName evidence="1">ATP phosphoribosyltransferase</fullName>
        <shortName evidence="1">ATP-PRT</shortName>
        <shortName evidence="1">ATP-PRTase</shortName>
        <ecNumber evidence="1">2.4.2.17</ecNumber>
    </recommendedName>
</protein>
<accession>B9K9R7</accession>
<feature type="chain" id="PRO_1000213280" description="ATP phosphoribosyltransferase">
    <location>
        <begin position="1"/>
        <end position="208"/>
    </location>
</feature>
<reference key="1">
    <citation type="submission" date="2007-11" db="EMBL/GenBank/DDBJ databases">
        <title>The genome sequence of the hyperthermophilic bacterium Thermotoga neapolitana.</title>
        <authorList>
            <person name="Lim S.K."/>
            <person name="Kim J.S."/>
            <person name="Cha S.H."/>
            <person name="Park B.C."/>
            <person name="Lee D.S."/>
            <person name="Tae H.S."/>
            <person name="Kim S.-J."/>
            <person name="Kim J.J."/>
            <person name="Park K.J."/>
            <person name="Lee S.Y."/>
        </authorList>
    </citation>
    <scope>NUCLEOTIDE SEQUENCE [LARGE SCALE GENOMIC DNA]</scope>
    <source>
        <strain>ATCC 49049 / DSM 4359 / NBRC 107923 / NS-E</strain>
    </source>
</reference>
<organism>
    <name type="scientific">Thermotoga neapolitana (strain ATCC 49049 / DSM 4359 / NBRC 107923 / NS-E)</name>
    <dbReference type="NCBI Taxonomy" id="309803"/>
    <lineage>
        <taxon>Bacteria</taxon>
        <taxon>Thermotogati</taxon>
        <taxon>Thermotogota</taxon>
        <taxon>Thermotogae</taxon>
        <taxon>Thermotogales</taxon>
        <taxon>Thermotogaceae</taxon>
        <taxon>Thermotoga</taxon>
    </lineage>
</organism>
<keyword id="KW-0028">Amino-acid biosynthesis</keyword>
<keyword id="KW-0067">ATP-binding</keyword>
<keyword id="KW-0963">Cytoplasm</keyword>
<keyword id="KW-0328">Glycosyltransferase</keyword>
<keyword id="KW-0368">Histidine biosynthesis</keyword>
<keyword id="KW-0547">Nucleotide-binding</keyword>
<keyword id="KW-0808">Transferase</keyword>
<name>HIS1_THENN</name>
<dbReference type="EC" id="2.4.2.17" evidence="1"/>
<dbReference type="EMBL" id="CP000916">
    <property type="protein sequence ID" value="ACM23700.1"/>
    <property type="molecule type" value="Genomic_DNA"/>
</dbReference>
<dbReference type="RefSeq" id="WP_015919989.1">
    <property type="nucleotide sequence ID" value="NC_011978.1"/>
</dbReference>
<dbReference type="SMR" id="B9K9R7"/>
<dbReference type="STRING" id="309803.CTN_1524"/>
<dbReference type="KEGG" id="tna:CTN_1524"/>
<dbReference type="eggNOG" id="COG0040">
    <property type="taxonomic scope" value="Bacteria"/>
</dbReference>
<dbReference type="HOGENOM" id="CLU_038115_2_0_0"/>
<dbReference type="UniPathway" id="UPA00031">
    <property type="reaction ID" value="UER00006"/>
</dbReference>
<dbReference type="Proteomes" id="UP000000445">
    <property type="component" value="Chromosome"/>
</dbReference>
<dbReference type="GO" id="GO:0005737">
    <property type="term" value="C:cytoplasm"/>
    <property type="evidence" value="ECO:0007669"/>
    <property type="project" value="UniProtKB-SubCell"/>
</dbReference>
<dbReference type="GO" id="GO:0005524">
    <property type="term" value="F:ATP binding"/>
    <property type="evidence" value="ECO:0007669"/>
    <property type="project" value="UniProtKB-KW"/>
</dbReference>
<dbReference type="GO" id="GO:0003879">
    <property type="term" value="F:ATP phosphoribosyltransferase activity"/>
    <property type="evidence" value="ECO:0007669"/>
    <property type="project" value="UniProtKB-UniRule"/>
</dbReference>
<dbReference type="GO" id="GO:0000105">
    <property type="term" value="P:L-histidine biosynthetic process"/>
    <property type="evidence" value="ECO:0007669"/>
    <property type="project" value="UniProtKB-UniRule"/>
</dbReference>
<dbReference type="CDD" id="cd13595">
    <property type="entry name" value="PBP2_HisGs"/>
    <property type="match status" value="1"/>
</dbReference>
<dbReference type="FunFam" id="3.40.190.10:FF:000008">
    <property type="entry name" value="ATP phosphoribosyltransferase"/>
    <property type="match status" value="1"/>
</dbReference>
<dbReference type="Gene3D" id="3.40.190.10">
    <property type="entry name" value="Periplasmic binding protein-like II"/>
    <property type="match status" value="2"/>
</dbReference>
<dbReference type="HAMAP" id="MF_01018">
    <property type="entry name" value="HisG_Short"/>
    <property type="match status" value="1"/>
</dbReference>
<dbReference type="InterPro" id="IPR013820">
    <property type="entry name" value="ATP_PRibTrfase_cat"/>
</dbReference>
<dbReference type="InterPro" id="IPR018198">
    <property type="entry name" value="ATP_PRibTrfase_CS"/>
</dbReference>
<dbReference type="InterPro" id="IPR001348">
    <property type="entry name" value="ATP_PRibTrfase_HisG"/>
</dbReference>
<dbReference type="InterPro" id="IPR024893">
    <property type="entry name" value="ATP_PRibTrfase_HisG_short"/>
</dbReference>
<dbReference type="NCBIfam" id="TIGR00070">
    <property type="entry name" value="hisG"/>
    <property type="match status" value="1"/>
</dbReference>
<dbReference type="PANTHER" id="PTHR21403:SF8">
    <property type="entry name" value="ATP PHOSPHORIBOSYLTRANSFERASE"/>
    <property type="match status" value="1"/>
</dbReference>
<dbReference type="PANTHER" id="PTHR21403">
    <property type="entry name" value="ATP PHOSPHORIBOSYLTRANSFERASE ATP-PRTASE"/>
    <property type="match status" value="1"/>
</dbReference>
<dbReference type="Pfam" id="PF01634">
    <property type="entry name" value="HisG"/>
    <property type="match status" value="1"/>
</dbReference>
<dbReference type="SUPFAM" id="SSF53850">
    <property type="entry name" value="Periplasmic binding protein-like II"/>
    <property type="match status" value="1"/>
</dbReference>
<dbReference type="PROSITE" id="PS01316">
    <property type="entry name" value="ATP_P_PHORIBOSYLTR"/>
    <property type="match status" value="1"/>
</dbReference>
<gene>
    <name evidence="1" type="primary">hisG</name>
    <name type="ordered locus">CTN_1524</name>
</gene>
<sequence length="208" mass="23738">MLKLAIPKGRLEEKVMELLKKAGYTFQKESSILREGEDVTCFMVRPFDVPTYLTYGVADIGFCGTDVLLEKETSLIQPFFIPTNVSRMVLAGPKGKKIPEGEKRIATKFPNITRRYCESRGWHCKIIPLKGSVELAPIAGLSDLIVDITETGRTLRENDLEVLDEIFIIRTHVVVNPVSYRTKREEVISFLEKLQEVMKNDNHEKSHR</sequence>